<evidence type="ECO:0000255" key="1">
    <source>
        <dbReference type="HAMAP-Rule" id="MF_00061"/>
    </source>
</evidence>
<feature type="chain" id="PRO_1000092094" description="4-diphosphocytidyl-2-C-methyl-D-erythritol kinase">
    <location>
        <begin position="1"/>
        <end position="306"/>
    </location>
</feature>
<feature type="active site" evidence="1">
    <location>
        <position position="11"/>
    </location>
</feature>
<feature type="active site" evidence="1">
    <location>
        <position position="153"/>
    </location>
</feature>
<feature type="binding site" evidence="1">
    <location>
        <begin position="113"/>
        <end position="123"/>
    </location>
    <ligand>
        <name>ATP</name>
        <dbReference type="ChEBI" id="CHEBI:30616"/>
    </ligand>
</feature>
<keyword id="KW-0067">ATP-binding</keyword>
<keyword id="KW-0414">Isoprene biosynthesis</keyword>
<keyword id="KW-0418">Kinase</keyword>
<keyword id="KW-0547">Nucleotide-binding</keyword>
<keyword id="KW-1185">Reference proteome</keyword>
<keyword id="KW-0808">Transferase</keyword>
<name>ISPE_LEPBP</name>
<reference key="1">
    <citation type="journal article" date="2008" name="PLoS ONE">
        <title>Genome sequence of the saprophyte Leptospira biflexa provides insights into the evolution of Leptospira and the pathogenesis of leptospirosis.</title>
        <authorList>
            <person name="Picardeau M."/>
            <person name="Bulach D.M."/>
            <person name="Bouchier C."/>
            <person name="Zuerner R.L."/>
            <person name="Zidane N."/>
            <person name="Wilson P.J."/>
            <person name="Creno S."/>
            <person name="Kuczek E.S."/>
            <person name="Bommezzadri S."/>
            <person name="Davis J.C."/>
            <person name="McGrath A."/>
            <person name="Johnson M.J."/>
            <person name="Boursaux-Eude C."/>
            <person name="Seemann T."/>
            <person name="Rouy Z."/>
            <person name="Coppel R.L."/>
            <person name="Rood J.I."/>
            <person name="Lajus A."/>
            <person name="Davies J.K."/>
            <person name="Medigue C."/>
            <person name="Adler B."/>
        </authorList>
    </citation>
    <scope>NUCLEOTIDE SEQUENCE [LARGE SCALE GENOMIC DNA]</scope>
    <source>
        <strain>Patoc 1 / ATCC 23582 / Paris</strain>
    </source>
</reference>
<accession>B0SKG9</accession>
<sequence>MVLLQTIAHAKINIGLMIPYKREDGLHEIRSVFVPIDFGDPMEIQIKSLPKGIVSRFVFHSTNHLQGYRHSLFEAVSERGDLSQNILTKTFHKLKPYFQEALEIKVQIQKHLPPEGGIGGGSSNAGVLLQHLFPYTNLSRGEQIQFAKSIGADVPFFLQSSACFVTGIGEVMEPIRLAKGFGILAIPPFGLSTGSMYASLQKSLQKPYGSEVWKSLTEDLIRSLHVGDWVYLQNRLENEFEKIAFQTQPLLKELKLGFFESGAIFASLSGSGSCLYGIYPTEEKRNEALPNVSLRFPKMEFRTFSF</sequence>
<dbReference type="EC" id="2.7.1.148" evidence="1"/>
<dbReference type="EMBL" id="CP000786">
    <property type="protein sequence ID" value="ABZ96383.1"/>
    <property type="molecule type" value="Genomic_DNA"/>
</dbReference>
<dbReference type="SMR" id="B0SKG9"/>
<dbReference type="STRING" id="456481.LEPBI_I0238"/>
<dbReference type="KEGG" id="lbi:LEPBI_I0238"/>
<dbReference type="HOGENOM" id="CLU_053057_1_1_12"/>
<dbReference type="OrthoDB" id="9809438at2"/>
<dbReference type="BioCyc" id="LBIF456481:LEPBI_RS01170-MONOMER"/>
<dbReference type="UniPathway" id="UPA00056">
    <property type="reaction ID" value="UER00094"/>
</dbReference>
<dbReference type="Proteomes" id="UP000001847">
    <property type="component" value="Chromosome I"/>
</dbReference>
<dbReference type="GO" id="GO:0050515">
    <property type="term" value="F:4-(cytidine 5'-diphospho)-2-C-methyl-D-erythritol kinase activity"/>
    <property type="evidence" value="ECO:0007669"/>
    <property type="project" value="UniProtKB-UniRule"/>
</dbReference>
<dbReference type="GO" id="GO:0005524">
    <property type="term" value="F:ATP binding"/>
    <property type="evidence" value="ECO:0007669"/>
    <property type="project" value="UniProtKB-UniRule"/>
</dbReference>
<dbReference type="GO" id="GO:0019288">
    <property type="term" value="P:isopentenyl diphosphate biosynthetic process, methylerythritol 4-phosphate pathway"/>
    <property type="evidence" value="ECO:0007669"/>
    <property type="project" value="UniProtKB-UniRule"/>
</dbReference>
<dbReference type="GO" id="GO:0016114">
    <property type="term" value="P:terpenoid biosynthetic process"/>
    <property type="evidence" value="ECO:0007669"/>
    <property type="project" value="InterPro"/>
</dbReference>
<dbReference type="Gene3D" id="3.30.230.10">
    <property type="match status" value="1"/>
</dbReference>
<dbReference type="Gene3D" id="3.30.70.890">
    <property type="entry name" value="GHMP kinase, C-terminal domain"/>
    <property type="match status" value="1"/>
</dbReference>
<dbReference type="HAMAP" id="MF_00061">
    <property type="entry name" value="IspE"/>
    <property type="match status" value="1"/>
</dbReference>
<dbReference type="InterPro" id="IPR013750">
    <property type="entry name" value="GHMP_kinase_C_dom"/>
</dbReference>
<dbReference type="InterPro" id="IPR036554">
    <property type="entry name" value="GHMP_kinase_C_sf"/>
</dbReference>
<dbReference type="InterPro" id="IPR006204">
    <property type="entry name" value="GHMP_kinase_N_dom"/>
</dbReference>
<dbReference type="InterPro" id="IPR004424">
    <property type="entry name" value="IspE"/>
</dbReference>
<dbReference type="InterPro" id="IPR020568">
    <property type="entry name" value="Ribosomal_Su5_D2-typ_SF"/>
</dbReference>
<dbReference type="InterPro" id="IPR014721">
    <property type="entry name" value="Ribsml_uS5_D2-typ_fold_subgr"/>
</dbReference>
<dbReference type="NCBIfam" id="NF011207">
    <property type="entry name" value="PRK14613.1"/>
    <property type="match status" value="1"/>
</dbReference>
<dbReference type="PANTHER" id="PTHR43527">
    <property type="entry name" value="4-DIPHOSPHOCYTIDYL-2-C-METHYL-D-ERYTHRITOL KINASE, CHLOROPLASTIC"/>
    <property type="match status" value="1"/>
</dbReference>
<dbReference type="PANTHER" id="PTHR43527:SF2">
    <property type="entry name" value="4-DIPHOSPHOCYTIDYL-2-C-METHYL-D-ERYTHRITOL KINASE, CHLOROPLASTIC"/>
    <property type="match status" value="1"/>
</dbReference>
<dbReference type="Pfam" id="PF08544">
    <property type="entry name" value="GHMP_kinases_C"/>
    <property type="match status" value="1"/>
</dbReference>
<dbReference type="Pfam" id="PF00288">
    <property type="entry name" value="GHMP_kinases_N"/>
    <property type="match status" value="1"/>
</dbReference>
<dbReference type="PIRSF" id="PIRSF010376">
    <property type="entry name" value="IspE"/>
    <property type="match status" value="1"/>
</dbReference>
<dbReference type="SUPFAM" id="SSF55060">
    <property type="entry name" value="GHMP Kinase, C-terminal domain"/>
    <property type="match status" value="1"/>
</dbReference>
<dbReference type="SUPFAM" id="SSF54211">
    <property type="entry name" value="Ribosomal protein S5 domain 2-like"/>
    <property type="match status" value="1"/>
</dbReference>
<protein>
    <recommendedName>
        <fullName evidence="1">4-diphosphocytidyl-2-C-methyl-D-erythritol kinase</fullName>
        <shortName evidence="1">CMK</shortName>
        <ecNumber evidence="1">2.7.1.148</ecNumber>
    </recommendedName>
    <alternativeName>
        <fullName evidence="1">4-(cytidine-5'-diphospho)-2-C-methyl-D-erythritol kinase</fullName>
    </alternativeName>
</protein>
<organism>
    <name type="scientific">Leptospira biflexa serovar Patoc (strain Patoc 1 / ATCC 23582 / Paris)</name>
    <dbReference type="NCBI Taxonomy" id="456481"/>
    <lineage>
        <taxon>Bacteria</taxon>
        <taxon>Pseudomonadati</taxon>
        <taxon>Spirochaetota</taxon>
        <taxon>Spirochaetia</taxon>
        <taxon>Leptospirales</taxon>
        <taxon>Leptospiraceae</taxon>
        <taxon>Leptospira</taxon>
    </lineage>
</organism>
<comment type="function">
    <text evidence="1">Catalyzes the phosphorylation of the position 2 hydroxy group of 4-diphosphocytidyl-2C-methyl-D-erythritol.</text>
</comment>
<comment type="catalytic activity">
    <reaction evidence="1">
        <text>4-CDP-2-C-methyl-D-erythritol + ATP = 4-CDP-2-C-methyl-D-erythritol 2-phosphate + ADP + H(+)</text>
        <dbReference type="Rhea" id="RHEA:18437"/>
        <dbReference type="ChEBI" id="CHEBI:15378"/>
        <dbReference type="ChEBI" id="CHEBI:30616"/>
        <dbReference type="ChEBI" id="CHEBI:57823"/>
        <dbReference type="ChEBI" id="CHEBI:57919"/>
        <dbReference type="ChEBI" id="CHEBI:456216"/>
        <dbReference type="EC" id="2.7.1.148"/>
    </reaction>
</comment>
<comment type="pathway">
    <text evidence="1">Isoprenoid biosynthesis; isopentenyl diphosphate biosynthesis via DXP pathway; isopentenyl diphosphate from 1-deoxy-D-xylulose 5-phosphate: step 3/6.</text>
</comment>
<comment type="similarity">
    <text evidence="1">Belongs to the GHMP kinase family. IspE subfamily.</text>
</comment>
<proteinExistence type="inferred from homology"/>
<gene>
    <name evidence="1" type="primary">ispE</name>
    <name type="ordered locus">LEPBI_I0238</name>
</gene>